<organism>
    <name type="scientific">Human immunodeficiency virus type 1 group M subtype C (isolate ETH2220)</name>
    <name type="common">HIV-1</name>
    <dbReference type="NCBI Taxonomy" id="388796"/>
    <lineage>
        <taxon>Viruses</taxon>
        <taxon>Riboviria</taxon>
        <taxon>Pararnavirae</taxon>
        <taxon>Artverviricota</taxon>
        <taxon>Revtraviricetes</taxon>
        <taxon>Ortervirales</taxon>
        <taxon>Retroviridae</taxon>
        <taxon>Orthoretrovirinae</taxon>
        <taxon>Lentivirus</taxon>
        <taxon>Human immunodeficiency virus type 1</taxon>
    </lineage>
</organism>
<sequence length="1439" mass="162166">MGARASILRGEKLDAWEKIKLRPGGKKHYMLKHLVWANRELEKFALNPDLLDTSAGCKQIIKQLQPALQTGTEELKSLFNTVATLYCVHQKIEIKDTKEALDKIEEEQNESQQKTQQAGAADRGKDSQNYPIVQNMQGQMVHQPISARTLNAWVKVVEEKAFSPEVIPMFTALSEGATPQDLNTMLNTVGGHQAAMQMLKDTINEEAAEWDRLHPVHAGPVAPGQMRDPRGSDIAGTTSTLQEQIAWMTGNPPVPVGDIYKRWIILGLNKIVRMYSPVSILDIKQGPKEPFRDYVDRFFKTLRAEQATQDVKNWMTDTLLVQNANPDCKTILRALGPGASLEEMMTACQGVGGPAHKARVLAEAMSQVNNTTIMMQKSNFKGPKRAIKCFNCGKEGHLARNCRAPRKKGCWKCGKEGHQMKDCTERQANFFRETLAFQQGKAREFPSEQTRANSPTRESQTRANSPTTRELQVRGSNTFSEAGAERQGSLNFPQITLWQRPLVTIKIGGQLKEALLDTGADDTVLEEINLPGKWKPKMIGGIGGFIKVRQYDQIIIEICGKKAIGTVLVGPTPVNIIGRNMLTQLGRTLNFPISPIETVPVKLKPGMDGPKVKQWPLTEEKIKALTAICEEMEQEGKISRIGPENPYNTPVFAIKKKDSTKWRKLVDFRELNKRTQDFWEVQLGIPHPAGLKKKKSVTVLDVGDAYFSVPLDEGFRKYTAFTIPSTNNETPGIRYQYNVLPQGWKGSPPIFQSSMPQILEPFRAPNPEIVIYQYMDDLYVGSDLEIGQHRAPIEELREHLLKWGFTTPDKKHQKEPPFLWMGYELHPDKWTVQPIQLPEKDSWTVNDIQKLVGKLNWASQIYPGIKVRQLCKLLRGAKALTDIVTLTEEAELELAENREILKEPVHGVFYDPSKDLIAEIQKQGNDQWTFQFYQEPFKNLKTGKFAKRGTAHTNDVKQLTAVVQKIALESIVIWGKTPKFRLPIQKETWEAWWTDYWQATWIPEWEFVNTPPLVKLWYQLEKEPIAGVETFYVDGAANRETKIGKAGYVTDRGRQKIVSLTETTNQKTELQAIQLALQDSGSEVNIVTDSQYALGIILAQPDKSESEIVNQIIEQLISKERVYLSWVPAHKGIGGNEQVDKLVSSGIRKVLFLDGIDKAQEEHEKYHSNWRAMANEFNIPPVVPKEIVACCDKCQLKGEAIHGQVNCSPGIWQLDCTHLEGKIILVAVHVASGYIEAEVIPAETGQETAYFLLKLAGRWPVRVIHTDNGSNFTSNAVKAACWWAGIQQEFGIPYNPQSQGVVESMNKELKKIIGQVREQAEHLKTAVQMAVFIHNFKRRGGIGGYSAGERIIDIIASDIQTKELQNQILKIQNFRVYYRDSRDPIWKGPAKLLWKGEGAVVIQDNSDIKVVPRRKAKIIRDYGKQMAGADCVAGRQDED</sequence>
<organismHost>
    <name type="scientific">Homo sapiens</name>
    <name type="common">Human</name>
    <dbReference type="NCBI Taxonomy" id="9606"/>
</organismHost>
<dbReference type="EC" id="3.4.23.16"/>
<dbReference type="EC" id="2.7.7.49"/>
<dbReference type="EC" id="2.7.7.7"/>
<dbReference type="EC" id="3.1.26.13"/>
<dbReference type="EC" id="3.1.13.2"/>
<dbReference type="EC" id="2.7.7.-" evidence="5"/>
<dbReference type="EC" id="3.1.-.-" evidence="5"/>
<dbReference type="EMBL" id="U46016">
    <property type="protein sequence ID" value="AAB36501.1"/>
    <property type="status" value="ALT_SEQ"/>
    <property type="molecule type" value="Genomic_DNA"/>
</dbReference>
<dbReference type="PDB" id="6T6I">
    <property type="method" value="X-ray"/>
    <property type="resolution" value="2.20 A"/>
    <property type="chains" value="A=1370-1421"/>
</dbReference>
<dbReference type="PDB" id="6T6J">
    <property type="method" value="X-ray"/>
    <property type="resolution" value="2.00 A"/>
    <property type="chains" value="A/B/C=1370-1421"/>
</dbReference>
<dbReference type="PDBsum" id="6T6I"/>
<dbReference type="PDBsum" id="6T6J"/>
<dbReference type="SMR" id="Q75002"/>
<dbReference type="MEROPS" id="A02.001"/>
<dbReference type="PRO" id="PR:Q75002"/>
<dbReference type="Proteomes" id="UP000007694">
    <property type="component" value="Segment"/>
</dbReference>
<dbReference type="GO" id="GO:0043657">
    <property type="term" value="C:host cell"/>
    <property type="evidence" value="ECO:0007669"/>
    <property type="project" value="GOC"/>
</dbReference>
<dbReference type="GO" id="GO:0042025">
    <property type="term" value="C:host cell nucleus"/>
    <property type="evidence" value="ECO:0007669"/>
    <property type="project" value="UniProtKB-SubCell"/>
</dbReference>
<dbReference type="GO" id="GO:0020002">
    <property type="term" value="C:host cell plasma membrane"/>
    <property type="evidence" value="ECO:0007669"/>
    <property type="project" value="UniProtKB-SubCell"/>
</dbReference>
<dbReference type="GO" id="GO:0072494">
    <property type="term" value="C:host multivesicular body"/>
    <property type="evidence" value="ECO:0007669"/>
    <property type="project" value="UniProtKB-SubCell"/>
</dbReference>
<dbReference type="GO" id="GO:0016020">
    <property type="term" value="C:membrane"/>
    <property type="evidence" value="ECO:0007669"/>
    <property type="project" value="UniProtKB-KW"/>
</dbReference>
<dbReference type="GO" id="GO:0019013">
    <property type="term" value="C:viral nucleocapsid"/>
    <property type="evidence" value="ECO:0007669"/>
    <property type="project" value="UniProtKB-KW"/>
</dbReference>
<dbReference type="GO" id="GO:0055036">
    <property type="term" value="C:virion membrane"/>
    <property type="evidence" value="ECO:0007669"/>
    <property type="project" value="UniProtKB-SubCell"/>
</dbReference>
<dbReference type="GO" id="GO:0004190">
    <property type="term" value="F:aspartic-type endopeptidase activity"/>
    <property type="evidence" value="ECO:0007669"/>
    <property type="project" value="UniProtKB-KW"/>
</dbReference>
<dbReference type="GO" id="GO:0003677">
    <property type="term" value="F:DNA binding"/>
    <property type="evidence" value="ECO:0007669"/>
    <property type="project" value="UniProtKB-KW"/>
</dbReference>
<dbReference type="GO" id="GO:0003887">
    <property type="term" value="F:DNA-directed DNA polymerase activity"/>
    <property type="evidence" value="ECO:0007669"/>
    <property type="project" value="UniProtKB-KW"/>
</dbReference>
<dbReference type="GO" id="GO:0004533">
    <property type="term" value="F:exoribonuclease H activity"/>
    <property type="evidence" value="ECO:0007669"/>
    <property type="project" value="UniProtKB-EC"/>
</dbReference>
<dbReference type="GO" id="GO:0008289">
    <property type="term" value="F:lipid binding"/>
    <property type="evidence" value="ECO:0007669"/>
    <property type="project" value="UniProtKB-KW"/>
</dbReference>
<dbReference type="GO" id="GO:0035613">
    <property type="term" value="F:RNA stem-loop binding"/>
    <property type="evidence" value="ECO:0007669"/>
    <property type="project" value="TreeGrafter"/>
</dbReference>
<dbReference type="GO" id="GO:0003964">
    <property type="term" value="F:RNA-directed DNA polymerase activity"/>
    <property type="evidence" value="ECO:0007669"/>
    <property type="project" value="UniProtKB-KW"/>
</dbReference>
<dbReference type="GO" id="GO:0004523">
    <property type="term" value="F:RNA-DNA hybrid ribonuclease activity"/>
    <property type="evidence" value="ECO:0007669"/>
    <property type="project" value="InterPro"/>
</dbReference>
<dbReference type="GO" id="GO:0005198">
    <property type="term" value="F:structural molecule activity"/>
    <property type="evidence" value="ECO:0007669"/>
    <property type="project" value="InterPro"/>
</dbReference>
<dbReference type="GO" id="GO:0008270">
    <property type="term" value="F:zinc ion binding"/>
    <property type="evidence" value="ECO:0007669"/>
    <property type="project" value="UniProtKB-KW"/>
</dbReference>
<dbReference type="GO" id="GO:0015074">
    <property type="term" value="P:DNA integration"/>
    <property type="evidence" value="ECO:0007669"/>
    <property type="project" value="UniProtKB-KW"/>
</dbReference>
<dbReference type="GO" id="GO:0006310">
    <property type="term" value="P:DNA recombination"/>
    <property type="evidence" value="ECO:0007669"/>
    <property type="project" value="UniProtKB-KW"/>
</dbReference>
<dbReference type="GO" id="GO:0075713">
    <property type="term" value="P:establishment of integrated proviral latency"/>
    <property type="evidence" value="ECO:0007669"/>
    <property type="project" value="UniProtKB-KW"/>
</dbReference>
<dbReference type="GO" id="GO:0006508">
    <property type="term" value="P:proteolysis"/>
    <property type="evidence" value="ECO:0007669"/>
    <property type="project" value="UniProtKB-KW"/>
</dbReference>
<dbReference type="GO" id="GO:0046718">
    <property type="term" value="P:symbiont entry into host cell"/>
    <property type="evidence" value="ECO:0007669"/>
    <property type="project" value="UniProtKB-KW"/>
</dbReference>
<dbReference type="GO" id="GO:0052151">
    <property type="term" value="P:symbiont-mediated activation of host apoptosis"/>
    <property type="evidence" value="ECO:0007669"/>
    <property type="project" value="UniProtKB-KW"/>
</dbReference>
<dbReference type="GO" id="GO:0039657">
    <property type="term" value="P:symbiont-mediated suppression of host gene expression"/>
    <property type="evidence" value="ECO:0007669"/>
    <property type="project" value="UniProtKB-KW"/>
</dbReference>
<dbReference type="GO" id="GO:0044826">
    <property type="term" value="P:viral genome integration into host DNA"/>
    <property type="evidence" value="ECO:0007669"/>
    <property type="project" value="UniProtKB-KW"/>
</dbReference>
<dbReference type="GO" id="GO:0075732">
    <property type="term" value="P:viral penetration into host nucleus"/>
    <property type="evidence" value="ECO:0007669"/>
    <property type="project" value="UniProtKB-KW"/>
</dbReference>
<dbReference type="GO" id="GO:0075523">
    <property type="term" value="P:viral translational frameshifting"/>
    <property type="evidence" value="ECO:0007669"/>
    <property type="project" value="UniProtKB-KW"/>
</dbReference>
<dbReference type="CDD" id="cd05482">
    <property type="entry name" value="HIV_retropepsin_like"/>
    <property type="match status" value="1"/>
</dbReference>
<dbReference type="FunFam" id="1.10.1200.30:FF:000001">
    <property type="entry name" value="Gag polyprotein"/>
    <property type="match status" value="1"/>
</dbReference>
<dbReference type="FunFam" id="1.10.375.10:FF:000001">
    <property type="entry name" value="Gag polyprotein"/>
    <property type="match status" value="1"/>
</dbReference>
<dbReference type="FunFam" id="4.10.60.10:FF:000001">
    <property type="entry name" value="Gag polyprotein"/>
    <property type="match status" value="1"/>
</dbReference>
<dbReference type="FunFam" id="2.40.70.10:FF:000001">
    <property type="entry name" value="Gag-Pol polyprotein"/>
    <property type="match status" value="1"/>
</dbReference>
<dbReference type="FunFam" id="3.30.420.10:FF:000025">
    <property type="entry name" value="Gag-Pol polyprotein"/>
    <property type="match status" value="1"/>
</dbReference>
<dbReference type="FunFam" id="3.30.70.270:FF:000006">
    <property type="entry name" value="Gag-Pol polyprotein"/>
    <property type="match status" value="1"/>
</dbReference>
<dbReference type="FunFam" id="3.30.420.10:FF:000017">
    <property type="entry name" value="POL polyprotein"/>
    <property type="match status" value="1"/>
</dbReference>
<dbReference type="Gene3D" id="1.10.10.200">
    <property type="match status" value="1"/>
</dbReference>
<dbReference type="Gene3D" id="1.10.1200.30">
    <property type="match status" value="1"/>
</dbReference>
<dbReference type="Gene3D" id="3.30.70.270">
    <property type="match status" value="3"/>
</dbReference>
<dbReference type="Gene3D" id="2.40.70.10">
    <property type="entry name" value="Acid Proteases"/>
    <property type="match status" value="1"/>
</dbReference>
<dbReference type="Gene3D" id="3.10.10.10">
    <property type="entry name" value="HIV Type 1 Reverse Transcriptase, subunit A, domain 1"/>
    <property type="match status" value="1"/>
</dbReference>
<dbReference type="Gene3D" id="1.10.375.10">
    <property type="entry name" value="Human Immunodeficiency Virus Type 1 Capsid Protein"/>
    <property type="match status" value="1"/>
</dbReference>
<dbReference type="Gene3D" id="1.10.150.90">
    <property type="entry name" value="Immunodeficiency lentiviruses, gag gene matrix protein p17"/>
    <property type="match status" value="1"/>
</dbReference>
<dbReference type="Gene3D" id="2.30.30.10">
    <property type="entry name" value="Integrase, C-terminal domain superfamily, retroviral"/>
    <property type="match status" value="1"/>
</dbReference>
<dbReference type="Gene3D" id="3.30.420.10">
    <property type="entry name" value="Ribonuclease H-like superfamily/Ribonuclease H"/>
    <property type="match status" value="2"/>
</dbReference>
<dbReference type="Gene3D" id="1.20.5.760">
    <property type="entry name" value="Single helix bin"/>
    <property type="match status" value="1"/>
</dbReference>
<dbReference type="Gene3D" id="4.10.60.10">
    <property type="entry name" value="Zinc finger, CCHC-type"/>
    <property type="match status" value="1"/>
</dbReference>
<dbReference type="InterPro" id="IPR001969">
    <property type="entry name" value="Aspartic_peptidase_AS"/>
</dbReference>
<dbReference type="InterPro" id="IPR043502">
    <property type="entry name" value="DNA/RNA_pol_sf"/>
</dbReference>
<dbReference type="InterPro" id="IPR045345">
    <property type="entry name" value="Gag_p24_C"/>
</dbReference>
<dbReference type="InterPro" id="IPR017856">
    <property type="entry name" value="Integrase-like_N"/>
</dbReference>
<dbReference type="InterPro" id="IPR036862">
    <property type="entry name" value="Integrase_C_dom_sf_retrovir"/>
</dbReference>
<dbReference type="InterPro" id="IPR001037">
    <property type="entry name" value="Integrase_C_retrovir"/>
</dbReference>
<dbReference type="InterPro" id="IPR001584">
    <property type="entry name" value="Integrase_cat-core"/>
</dbReference>
<dbReference type="InterPro" id="IPR003308">
    <property type="entry name" value="Integrase_Zn-bd_dom_N"/>
</dbReference>
<dbReference type="InterPro" id="IPR000071">
    <property type="entry name" value="Lentvrl_matrix_N"/>
</dbReference>
<dbReference type="InterPro" id="IPR012344">
    <property type="entry name" value="Matrix_HIV/RSV_N"/>
</dbReference>
<dbReference type="InterPro" id="IPR001995">
    <property type="entry name" value="Peptidase_A2_cat"/>
</dbReference>
<dbReference type="InterPro" id="IPR021109">
    <property type="entry name" value="Peptidase_aspartic_dom_sf"/>
</dbReference>
<dbReference type="InterPro" id="IPR034170">
    <property type="entry name" value="Retropepsin-like_cat_dom"/>
</dbReference>
<dbReference type="InterPro" id="IPR018061">
    <property type="entry name" value="Retropepsins"/>
</dbReference>
<dbReference type="InterPro" id="IPR008916">
    <property type="entry name" value="Retrov_capsid_C"/>
</dbReference>
<dbReference type="InterPro" id="IPR008919">
    <property type="entry name" value="Retrov_capsid_N"/>
</dbReference>
<dbReference type="InterPro" id="IPR010999">
    <property type="entry name" value="Retrovr_matrix"/>
</dbReference>
<dbReference type="InterPro" id="IPR043128">
    <property type="entry name" value="Rev_trsase/Diguanyl_cyclase"/>
</dbReference>
<dbReference type="InterPro" id="IPR012337">
    <property type="entry name" value="RNaseH-like_sf"/>
</dbReference>
<dbReference type="InterPro" id="IPR002156">
    <property type="entry name" value="RNaseH_domain"/>
</dbReference>
<dbReference type="InterPro" id="IPR036397">
    <property type="entry name" value="RNaseH_sf"/>
</dbReference>
<dbReference type="InterPro" id="IPR000477">
    <property type="entry name" value="RT_dom"/>
</dbReference>
<dbReference type="InterPro" id="IPR010659">
    <property type="entry name" value="RVT_connect"/>
</dbReference>
<dbReference type="InterPro" id="IPR010661">
    <property type="entry name" value="RVT_thumb"/>
</dbReference>
<dbReference type="InterPro" id="IPR001878">
    <property type="entry name" value="Znf_CCHC"/>
</dbReference>
<dbReference type="InterPro" id="IPR036875">
    <property type="entry name" value="Znf_CCHC_sf"/>
</dbReference>
<dbReference type="PANTHER" id="PTHR41694">
    <property type="entry name" value="ENDOGENOUS RETROVIRUS GROUP K MEMBER POL PROTEIN"/>
    <property type="match status" value="1"/>
</dbReference>
<dbReference type="PANTHER" id="PTHR41694:SF3">
    <property type="entry name" value="RNA-DIRECTED DNA POLYMERASE-RELATED"/>
    <property type="match status" value="1"/>
</dbReference>
<dbReference type="Pfam" id="PF00540">
    <property type="entry name" value="Gag_p17"/>
    <property type="match status" value="1"/>
</dbReference>
<dbReference type="Pfam" id="PF19317">
    <property type="entry name" value="Gag_p24_C"/>
    <property type="match status" value="1"/>
</dbReference>
<dbReference type="Pfam" id="PF00552">
    <property type="entry name" value="IN_DBD_C"/>
    <property type="match status" value="1"/>
</dbReference>
<dbReference type="Pfam" id="PF02022">
    <property type="entry name" value="Integrase_Zn"/>
    <property type="match status" value="1"/>
</dbReference>
<dbReference type="Pfam" id="PF00075">
    <property type="entry name" value="RNase_H"/>
    <property type="match status" value="1"/>
</dbReference>
<dbReference type="Pfam" id="PF00665">
    <property type="entry name" value="rve"/>
    <property type="match status" value="1"/>
</dbReference>
<dbReference type="Pfam" id="PF00077">
    <property type="entry name" value="RVP"/>
    <property type="match status" value="1"/>
</dbReference>
<dbReference type="Pfam" id="PF00078">
    <property type="entry name" value="RVT_1"/>
    <property type="match status" value="1"/>
</dbReference>
<dbReference type="Pfam" id="PF06815">
    <property type="entry name" value="RVT_connect"/>
    <property type="match status" value="1"/>
</dbReference>
<dbReference type="Pfam" id="PF06817">
    <property type="entry name" value="RVT_thumb"/>
    <property type="match status" value="1"/>
</dbReference>
<dbReference type="Pfam" id="PF00098">
    <property type="entry name" value="zf-CCHC"/>
    <property type="match status" value="2"/>
</dbReference>
<dbReference type="PRINTS" id="PR00234">
    <property type="entry name" value="HIV1MATRIX"/>
</dbReference>
<dbReference type="SMART" id="SM00343">
    <property type="entry name" value="ZnF_C2HC"/>
    <property type="match status" value="2"/>
</dbReference>
<dbReference type="SUPFAM" id="SSF50630">
    <property type="entry name" value="Acid proteases"/>
    <property type="match status" value="1"/>
</dbReference>
<dbReference type="SUPFAM" id="SSF50122">
    <property type="entry name" value="DNA-binding domain of retroviral integrase"/>
    <property type="match status" value="1"/>
</dbReference>
<dbReference type="SUPFAM" id="SSF56672">
    <property type="entry name" value="DNA/RNA polymerases"/>
    <property type="match status" value="1"/>
</dbReference>
<dbReference type="SUPFAM" id="SSF46919">
    <property type="entry name" value="N-terminal Zn binding domain of HIV integrase"/>
    <property type="match status" value="1"/>
</dbReference>
<dbReference type="SUPFAM" id="SSF47836">
    <property type="entry name" value="Retroviral matrix proteins"/>
    <property type="match status" value="1"/>
</dbReference>
<dbReference type="SUPFAM" id="SSF47353">
    <property type="entry name" value="Retrovirus capsid dimerization domain-like"/>
    <property type="match status" value="1"/>
</dbReference>
<dbReference type="SUPFAM" id="SSF47943">
    <property type="entry name" value="Retrovirus capsid protein, N-terminal core domain"/>
    <property type="match status" value="1"/>
</dbReference>
<dbReference type="SUPFAM" id="SSF57756">
    <property type="entry name" value="Retrovirus zinc finger-like domains"/>
    <property type="match status" value="1"/>
</dbReference>
<dbReference type="SUPFAM" id="SSF53098">
    <property type="entry name" value="Ribonuclease H-like"/>
    <property type="match status" value="2"/>
</dbReference>
<dbReference type="PROSITE" id="PS50175">
    <property type="entry name" value="ASP_PROT_RETROV"/>
    <property type="match status" value="1"/>
</dbReference>
<dbReference type="PROSITE" id="PS00141">
    <property type="entry name" value="ASP_PROTEASE"/>
    <property type="match status" value="1"/>
</dbReference>
<dbReference type="PROSITE" id="PS50994">
    <property type="entry name" value="INTEGRASE"/>
    <property type="match status" value="1"/>
</dbReference>
<dbReference type="PROSITE" id="PS51027">
    <property type="entry name" value="INTEGRASE_DBD"/>
    <property type="match status" value="1"/>
</dbReference>
<dbReference type="PROSITE" id="PS50879">
    <property type="entry name" value="RNASE_H_1"/>
    <property type="match status" value="1"/>
</dbReference>
<dbReference type="PROSITE" id="PS50878">
    <property type="entry name" value="RT_POL"/>
    <property type="match status" value="1"/>
</dbReference>
<dbReference type="PROSITE" id="PS50158">
    <property type="entry name" value="ZF_CCHC"/>
    <property type="match status" value="2"/>
</dbReference>
<dbReference type="PROSITE" id="PS50876">
    <property type="entry name" value="ZF_INTEGRASE"/>
    <property type="match status" value="1"/>
</dbReference>
<gene>
    <name type="primary">gag-pol</name>
</gene>
<keyword id="KW-0002">3D-structure</keyword>
<keyword id="KW-1073">Activation of host caspases by virus</keyword>
<keyword id="KW-0014">AIDS</keyword>
<keyword id="KW-0064">Aspartyl protease</keyword>
<keyword id="KW-0167">Capsid protein</keyword>
<keyword id="KW-0229">DNA integration</keyword>
<keyword id="KW-0233">DNA recombination</keyword>
<keyword id="KW-0238">DNA-binding</keyword>
<keyword id="KW-0239">DNA-directed DNA polymerase</keyword>
<keyword id="KW-0255">Endonuclease</keyword>
<keyword id="KW-1262">Eukaryotic host gene expression shutoff by virus</keyword>
<keyword id="KW-1193">Eukaryotic host translation shutoff by virus</keyword>
<keyword id="KW-1032">Host cell membrane</keyword>
<keyword id="KW-1035">Host cytoplasm</keyword>
<keyword id="KW-1039">Host endosome</keyword>
<keyword id="KW-1190">Host gene expression shutoff by virus</keyword>
<keyword id="KW-1043">Host membrane</keyword>
<keyword id="KW-1048">Host nucleus</keyword>
<keyword id="KW-0945">Host-virus interaction</keyword>
<keyword id="KW-0378">Hydrolase</keyword>
<keyword id="KW-0446">Lipid-binding</keyword>
<keyword id="KW-0449">Lipoprotein</keyword>
<keyword id="KW-0460">Magnesium</keyword>
<keyword id="KW-0472">Membrane</keyword>
<keyword id="KW-0479">Metal-binding</keyword>
<keyword id="KW-1119">Modulation of host cell apoptosis by virus</keyword>
<keyword id="KW-0511">Multifunctional enzyme</keyword>
<keyword id="KW-0519">Myristate</keyword>
<keyword id="KW-0540">Nuclease</keyword>
<keyword id="KW-0548">Nucleotidyltransferase</keyword>
<keyword id="KW-0597">Phosphoprotein</keyword>
<keyword id="KW-0645">Protease</keyword>
<keyword id="KW-1185">Reference proteome</keyword>
<keyword id="KW-0677">Repeat</keyword>
<keyword id="KW-0688">Ribosomal frameshifting</keyword>
<keyword id="KW-0694">RNA-binding</keyword>
<keyword id="KW-0695">RNA-directed DNA polymerase</keyword>
<keyword id="KW-0808">Transferase</keyword>
<keyword id="KW-1179">Viral genome integration</keyword>
<keyword id="KW-0543">Viral nucleoprotein</keyword>
<keyword id="KW-1163">Viral penetration into host nucleus</keyword>
<keyword id="KW-1188">Viral release from host cell</keyword>
<keyword id="KW-0946">Virion</keyword>
<keyword id="KW-0917">Virion maturation</keyword>
<keyword id="KW-1160">Virus entry into host cell</keyword>
<keyword id="KW-0862">Zinc</keyword>
<keyword id="KW-0863">Zinc-finger</keyword>
<reference key="1">
    <citation type="journal article" date="1996" name="AIDS Res. Hum. Retroviruses">
        <title>Full-length sequence of an ethiopian human immunodeficiency virus type 1 (HIV-1) isolate of genetic subtype C.</title>
        <authorList>
            <person name="Salminen M.O."/>
            <person name="Johansson B."/>
            <person name="Sonnerborg A."/>
            <person name="Ayehunie S."/>
            <person name="Gotte D."/>
            <person name="Leinikki P."/>
            <person name="Burke D.S."/>
            <person name="McCutchan F.E."/>
        </authorList>
    </citation>
    <scope>NUCLEOTIDE SEQUENCE [GENOMIC DNA]</scope>
</reference>
<feature type="initiator methionine" description="Removed; by host" evidence="1">
    <location>
        <position position="1"/>
    </location>
</feature>
<feature type="chain" id="PRO_0000261267" description="Gag-Pol polyprotein">
    <location>
        <begin position="2"/>
        <end position="1439"/>
    </location>
</feature>
<feature type="chain" id="PRO_0000246496" description="Matrix protein p17" evidence="1">
    <location>
        <begin position="2"/>
        <end position="130"/>
    </location>
</feature>
<feature type="chain" id="PRO_0000246497" description="Capsid protein p24" evidence="1">
    <location>
        <begin position="131"/>
        <end position="361"/>
    </location>
</feature>
<feature type="peptide" id="PRO_0000246498" description="Spacer peptide 1" evidence="1">
    <location>
        <begin position="362"/>
        <end position="374"/>
    </location>
</feature>
<feature type="chain" id="PRO_0000246499" description="Nucleocapsid protein p7" evidence="1">
    <location>
        <begin position="375"/>
        <end position="429"/>
    </location>
</feature>
<feature type="peptide" id="PRO_0000246715" description="Transframe peptide" evidence="8">
    <location>
        <begin position="430"/>
        <end position="437"/>
    </location>
</feature>
<feature type="chain" id="PRO_0000246500" description="p6-pol" evidence="8">
    <location>
        <begin position="438"/>
        <end position="492"/>
    </location>
</feature>
<feature type="chain" id="PRO_0000246501" description="Protease" evidence="1">
    <location>
        <begin position="493"/>
        <end position="591"/>
    </location>
</feature>
<feature type="chain" id="PRO_0000246502" description="Reverse transcriptase/ribonuclease H" evidence="1">
    <location>
        <begin position="592"/>
        <end position="1151"/>
    </location>
</feature>
<feature type="chain" id="PRO_0000246503" description="p51 RT" evidence="1">
    <location>
        <begin position="592"/>
        <end position="1031"/>
    </location>
</feature>
<feature type="chain" id="PRO_0000246504" description="p15" evidence="1">
    <location>
        <begin position="1032"/>
        <end position="1151"/>
    </location>
</feature>
<feature type="chain" id="PRO_0000246505" description="Integrase" evidence="1">
    <location>
        <begin position="1152"/>
        <end position="1439"/>
    </location>
</feature>
<feature type="domain" description="Peptidase A2" evidence="10">
    <location>
        <begin position="512"/>
        <end position="581"/>
    </location>
</feature>
<feature type="domain" description="Reverse transcriptase" evidence="11">
    <location>
        <begin position="635"/>
        <end position="825"/>
    </location>
</feature>
<feature type="domain" description="RNase H type-1" evidence="12">
    <location>
        <begin position="1025"/>
        <end position="1148"/>
    </location>
</feature>
<feature type="domain" description="Integrase catalytic" evidence="14">
    <location>
        <begin position="1205"/>
        <end position="1355"/>
    </location>
</feature>
<feature type="zinc finger region" description="CCHC-type 1" evidence="9">
    <location>
        <begin position="387"/>
        <end position="404"/>
    </location>
</feature>
<feature type="zinc finger region" description="CCHC-type 2" evidence="9">
    <location>
        <begin position="408"/>
        <end position="425"/>
    </location>
</feature>
<feature type="zinc finger region" description="Integrase-type" evidence="13">
    <location>
        <begin position="1154"/>
        <end position="1195"/>
    </location>
</feature>
<feature type="DNA-binding region" description="Integrase-type" evidence="15">
    <location>
        <begin position="1374"/>
        <end position="1421"/>
    </location>
</feature>
<feature type="region of interest" description="Interaction with Gp41" evidence="7">
    <location>
        <begin position="7"/>
        <end position="31"/>
    </location>
</feature>
<feature type="region of interest" description="Interaction with host CALM1" evidence="5">
    <location>
        <begin position="8"/>
        <end position="43"/>
    </location>
</feature>
<feature type="region of interest" description="Interaction with host AP3D1" evidence="7">
    <location>
        <begin position="12"/>
        <end position="19"/>
    </location>
</feature>
<feature type="region of interest" description="Interaction with membrane phosphatidylinositol 4,5-bisphosphate and RNA" evidence="7">
    <location>
        <begin position="14"/>
        <end position="33"/>
    </location>
</feature>
<feature type="region of interest" description="Interaction with membrane phosphatidylinositol 4,5-bisphosphate" evidence="7">
    <location>
        <begin position="73"/>
        <end position="77"/>
    </location>
</feature>
<feature type="region of interest" description="Disordered" evidence="17">
    <location>
        <begin position="105"/>
        <end position="128"/>
    </location>
</feature>
<feature type="region of interest" description="Interaction with human PPIA/CYPA and NUP153" evidence="7">
    <location>
        <begin position="187"/>
        <end position="225"/>
    </location>
</feature>
<feature type="region of interest" description="Dimerization/Multimerization of capsid protein p24" evidence="5">
    <location>
        <begin position="275"/>
        <end position="361"/>
    </location>
</feature>
<feature type="region of interest" description="Disordered" evidence="17">
    <location>
        <begin position="441"/>
        <end position="485"/>
    </location>
</feature>
<feature type="region of interest" description="Dimerization of protease" evidence="5">
    <location>
        <begin position="493"/>
        <end position="497"/>
    </location>
</feature>
<feature type="region of interest" description="Dimerization of protease" evidence="5">
    <location>
        <begin position="541"/>
        <end position="547"/>
    </location>
</feature>
<feature type="region of interest" description="Dimerization of protease" evidence="5">
    <location>
        <begin position="580"/>
        <end position="592"/>
    </location>
</feature>
<feature type="region of interest" description="RT 'primer grip'" evidence="1">
    <location>
        <begin position="818"/>
        <end position="826"/>
    </location>
</feature>
<feature type="short sequence motif" description="Nuclear export signal" evidence="1">
    <location>
        <begin position="16"/>
        <end position="22"/>
    </location>
</feature>
<feature type="short sequence motif" description="Nuclear localization signal" evidence="1">
    <location>
        <begin position="26"/>
        <end position="32"/>
    </location>
</feature>
<feature type="short sequence motif" description="Tryptophan repeat motif" evidence="1">
    <location>
        <begin position="989"/>
        <end position="1005"/>
    </location>
</feature>
<feature type="compositionally biased region" description="Polar residues" evidence="17">
    <location>
        <begin position="447"/>
        <end position="480"/>
    </location>
</feature>
<feature type="active site" description="For protease activity; shared with dimeric partner" evidence="16">
    <location>
        <position position="517"/>
    </location>
</feature>
<feature type="binding site" evidence="1">
    <location>
        <position position="701"/>
    </location>
    <ligand>
        <name>Mg(2+)</name>
        <dbReference type="ChEBI" id="CHEBI:18420"/>
        <label>1</label>
        <note>catalytic; for reverse transcriptase activity</note>
    </ligand>
</feature>
<feature type="binding site" evidence="1">
    <location>
        <position position="776"/>
    </location>
    <ligand>
        <name>Mg(2+)</name>
        <dbReference type="ChEBI" id="CHEBI:18420"/>
        <label>1</label>
        <note>catalytic; for reverse transcriptase activity</note>
    </ligand>
</feature>
<feature type="binding site" evidence="1">
    <location>
        <position position="777"/>
    </location>
    <ligand>
        <name>Mg(2+)</name>
        <dbReference type="ChEBI" id="CHEBI:18420"/>
        <label>1</label>
        <note>catalytic; for reverse transcriptase activity</note>
    </ligand>
</feature>
<feature type="binding site" evidence="1">
    <location>
        <position position="1034"/>
    </location>
    <ligand>
        <name>Mg(2+)</name>
        <dbReference type="ChEBI" id="CHEBI:18420"/>
        <label>2</label>
        <note>catalytic; for RNase H activity</note>
    </ligand>
</feature>
<feature type="binding site" evidence="1">
    <location>
        <position position="1069"/>
    </location>
    <ligand>
        <name>Mg(2+)</name>
        <dbReference type="ChEBI" id="CHEBI:18420"/>
        <label>2</label>
        <note>catalytic; for RNase H activity</note>
    </ligand>
</feature>
<feature type="binding site" evidence="1">
    <location>
        <position position="1089"/>
    </location>
    <ligand>
        <name>Mg(2+)</name>
        <dbReference type="ChEBI" id="CHEBI:18420"/>
        <label>2</label>
        <note>catalytic; for RNase H activity</note>
    </ligand>
</feature>
<feature type="binding site" evidence="1">
    <location>
        <position position="1140"/>
    </location>
    <ligand>
        <name>Mg(2+)</name>
        <dbReference type="ChEBI" id="CHEBI:18420"/>
        <label>2</label>
        <note>catalytic; for RNase H activity</note>
    </ligand>
</feature>
<feature type="binding site" evidence="13">
    <location>
        <position position="1163"/>
    </location>
    <ligand>
        <name>Zn(2+)</name>
        <dbReference type="ChEBI" id="CHEBI:29105"/>
    </ligand>
</feature>
<feature type="binding site" evidence="13">
    <location>
        <position position="1167"/>
    </location>
    <ligand>
        <name>Zn(2+)</name>
        <dbReference type="ChEBI" id="CHEBI:29105"/>
    </ligand>
</feature>
<feature type="binding site" evidence="13">
    <location>
        <position position="1191"/>
    </location>
    <ligand>
        <name>Zn(2+)</name>
        <dbReference type="ChEBI" id="CHEBI:29105"/>
    </ligand>
</feature>
<feature type="binding site" evidence="13">
    <location>
        <position position="1194"/>
    </location>
    <ligand>
        <name>Zn(2+)</name>
        <dbReference type="ChEBI" id="CHEBI:29105"/>
    </ligand>
</feature>
<feature type="binding site" evidence="1">
    <location>
        <position position="1215"/>
    </location>
    <ligand>
        <name>Mg(2+)</name>
        <dbReference type="ChEBI" id="CHEBI:18420"/>
        <label>3</label>
        <note>catalytic; for integrase activity</note>
    </ligand>
</feature>
<feature type="binding site" evidence="1">
    <location>
        <position position="1267"/>
    </location>
    <ligand>
        <name>Mg(2+)</name>
        <dbReference type="ChEBI" id="CHEBI:18420"/>
        <label>3</label>
        <note>catalytic; for integrase activity</note>
    </ligand>
</feature>
<feature type="binding site" evidence="5">
    <location>
        <position position="1303"/>
    </location>
    <ligand>
        <name>Mg(2+)</name>
        <dbReference type="ChEBI" id="CHEBI:18420"/>
        <label>3</label>
        <note>catalytic; for integrase activity</note>
    </ligand>
</feature>
<feature type="site" description="Cleavage; by viral protease" evidence="1">
    <location>
        <begin position="130"/>
        <end position="131"/>
    </location>
</feature>
<feature type="site" description="Cis/trans isomerization of proline peptide bond; by human PPIA/CYPA" evidence="1">
    <location>
        <begin position="219"/>
        <end position="220"/>
    </location>
</feature>
<feature type="site" description="Cleavage; by viral protease" evidence="1">
    <location>
        <begin position="361"/>
        <end position="362"/>
    </location>
</feature>
<feature type="site" description="Cleavage; by viral protease" evidence="1">
    <location>
        <begin position="374"/>
        <end position="375"/>
    </location>
</feature>
<feature type="site" description="Cleavage; by viral protease" evidence="8">
    <location>
        <begin position="429"/>
        <end position="430"/>
    </location>
</feature>
<feature type="site" description="Cleavage; by viral protease" evidence="1">
    <location>
        <begin position="437"/>
        <end position="438"/>
    </location>
</feature>
<feature type="site" description="Cleavage; by viral protease" evidence="1">
    <location>
        <begin position="492"/>
        <end position="493"/>
    </location>
</feature>
<feature type="site" description="Cleavage; by viral protease" evidence="1">
    <location>
        <begin position="591"/>
        <end position="592"/>
    </location>
</feature>
<feature type="site" description="Essential for RT p66/p51 heterodimerization" evidence="1">
    <location>
        <position position="992"/>
    </location>
</feature>
<feature type="site" description="Essential for RT p66/p51 heterodimerization" evidence="1">
    <location>
        <position position="1005"/>
    </location>
</feature>
<feature type="site" description="Cleavage; by viral protease; partial" evidence="1">
    <location>
        <begin position="1031"/>
        <end position="1032"/>
    </location>
</feature>
<feature type="site" description="Cleavage; by viral protease" evidence="1">
    <location>
        <begin position="1151"/>
        <end position="1152"/>
    </location>
</feature>
<feature type="modified residue" description="Phosphotyrosine; by host" evidence="1">
    <location>
        <position position="130"/>
    </location>
</feature>
<feature type="lipid moiety-binding region" description="N-myristoyl glycine; by host" evidence="1">
    <location>
        <position position="2"/>
    </location>
</feature>
<feature type="strand" evidence="19">
    <location>
        <begin position="1374"/>
        <end position="1378"/>
    </location>
</feature>
<feature type="strand" evidence="19">
    <location>
        <begin position="1387"/>
        <end position="1395"/>
    </location>
</feature>
<feature type="strand" evidence="19">
    <location>
        <begin position="1397"/>
        <end position="1404"/>
    </location>
</feature>
<feature type="strand" evidence="19">
    <location>
        <begin position="1407"/>
        <end position="1412"/>
    </location>
</feature>
<feature type="helix" evidence="19">
    <location>
        <begin position="1413"/>
        <end position="1415"/>
    </location>
</feature>
<feature type="strand" evidence="19">
    <location>
        <begin position="1416"/>
        <end position="1420"/>
    </location>
</feature>
<accession>Q75002</accession>
<comment type="function">
    <molecule>Gag-Pol polyprotein</molecule>
    <text evidence="1">Mediates, with Gag polyprotein, the essential events in virion assembly, including binding the plasma membrane, making the protein-protein interactions necessary to create spherical particles, recruiting the viral Env proteins, and packaging the genomic RNA via direct interactions with the RNA packaging sequence (Psi). Gag-Pol polyprotein may regulate its own translation, by the binding genomic RNA in the 5'-UTR. At low concentration, the polyprotein would promote translation, whereas at high concentration, the polyprotein would encapsidate genomic RNA and then shut off translation.</text>
</comment>
<comment type="function">
    <molecule>Matrix protein p17</molecule>
    <text evidence="7">Targets the polyprotein to the plasma membrane via a multipartite membrane-binding signal, that includes its myristoylated N-terminus. Matrix protein is part of the pre-integration complex. Implicated in the release from host cell mediated by Vpu. Binds to RNA.</text>
</comment>
<comment type="function">
    <molecule>Capsid protein p24</molecule>
    <text evidence="5 7">Forms the conical core that encapsulates the genomic RNA-nucleocapsid complex in the virion. Most core are conical, with only 7% tubular. The core is constituted by capsid protein hexamer subunits. The core is disassembled soon after virion entry (By similarity). Host restriction factors such as TRIM5-alpha or TRIMCyp bind retroviral capsids and cause premature capsid disassembly, leading to blocks in reverse transcription. Capsid restriction by TRIM5 is one of the factors which restricts HIV-1 to the human species. Host PIN1 apparently facilitates the virion uncoating. On the other hand, interactions with PDZD8 or CYPA stabilize the capsid.</text>
</comment>
<comment type="function">
    <molecule>Nucleocapsid protein p7</molecule>
    <text evidence="5">Encapsulates and protects viral dimeric unspliced genomic RNA (gRNA). Binds these RNAs through its zinc fingers. Acts as a nucleic acid chaperone which is involved in rearangement of nucleic acid secondary structure during gRNA retrotranscription. Also facilitates template switch leading to recombination. As part of the polyprotein, participates in gRNA dimerization, packaging, tRNA incorporation and virion assembly.</text>
</comment>
<comment type="function">
    <molecule>Protease</molecule>
    <text evidence="5 10">Aspartyl protease that mediates proteolytic cleavages of Gag and Gag-Pol polyproteins during or shortly after the release of the virion from the plasma membrane. Cleavages take place as an ordered, step-wise cascade to yield mature proteins. This process is called maturation. Displays maximal activity during the budding process just prior to particle release from the cell. Also cleaves Nef and Vif, probably concomitantly with viral structural proteins on maturation of virus particles. Hydrolyzes host EIF4GI and PABP1 in order to shut off the capped cellular mRNA translation. The resulting inhibition of cellular protein synthesis serves to ensure maximal viral gene expression and to evade host immune response. Also mediates cleavage of host YTHDF3. Mediates cleavage of host CARD8, thereby activating the CARD8 inflammasome, leading to the clearance of latent HIV-1 in patient CD4(+) T-cells after viral reactivation; in contrast, HIV-1 can evade CARD8-sensing when its protease remains inactive in infected cells prior to viral budding (By similarity).</text>
</comment>
<comment type="function">
    <molecule>Reverse transcriptase/ribonuclease H</molecule>
    <text evidence="5">Multifunctional enzyme that converts the viral RNA genome into dsDNA in the cytoplasm, shortly after virus entry into the cell. This enzyme displays a DNA polymerase activity that can copy either DNA or RNA templates, and a ribonuclease H (RNase H) activity that cleaves the RNA strand of RNA-DNA heteroduplexes in a partially processive 3' to 5' endonucleasic mode. Conversion of viral genomic RNA into dsDNA requires many steps. A tRNA(3)-Lys binds to the primer-binding site (PBS) situated at the 5'-end of the viral RNA. RT uses the 3' end of the tRNA primer to perform a short round of RNA-dependent minus-strand DNA synthesis. The reading proceeds through the U5 region and ends after the repeated (R) region which is present at both ends of viral RNA. The portion of the RNA-DNA heteroduplex is digested by the RNase H, resulting in a ssDNA product attached to the tRNA primer. This ssDNA/tRNA hybridizes with the identical R region situated at the 3' end of viral RNA. This template exchange, known as minus-strand DNA strong stop transfer, can be either intra- or intermolecular. RT uses the 3' end of this newly synthesized short ssDNA to perform the RNA-dependent minus-strand DNA synthesis of the whole template. RNase H digests the RNA template except for two polypurine tracts (PPTs) situated at the 5'-end and near the center of the genome. It is not clear if both polymerase and RNase H activities are simultaneous. RNase H probably can proceed both in a polymerase-dependent (RNA cut into small fragments by the same RT performing DNA synthesis) and a polymerase-independent mode (cleavage of remaining RNA fragments by free RTs). Secondly, RT performs DNA-directed plus-strand DNA synthesis using the PPTs that have not been removed by RNase H as primers. PPTs and tRNA primers are then removed by RNase H. The 3' and 5' ssDNA PBS regions hybridize to form a circular dsDNA intermediate. Strand displacement synthesis by RT to the PBS and PPT ends produces a blunt ended, linear dsDNA copy of the viral genome that includes long terminal repeats (LTRs) at both ends.</text>
</comment>
<comment type="function">
    <molecule>Integrase</molecule>
    <text evidence="5">Catalyzes viral DNA integration into the host chromosome, by performing a series of DNA cutting and joining reactions. This enzyme activity takes place after virion entry into a cell and reverse transcription of the RNA genome in dsDNA. The first step in the integration process is 3' processing. This step requires a complex comprising the viral genome, matrix protein, Vpr and integrase. This complex is called the pre-integration complex (PIC). The integrase protein removes 2 nucleotides from each 3' end of the viral DNA, leaving recessed CA OH's at the 3' ends. In the second step, the PIC enters cell nucleus. This process is mediated through integrase and Vpr proteins, and allows the virus to infect a non dividing cell. This ability to enter the nucleus is specific of lentiviruses, other retroviruses cannot and rely on cell division to access cell chromosomes. In the third step, termed strand transfer, the integrase protein joins the previously processed 3' ends to the 5' ends of strands of target cellular DNA at the site of integration. The 5'-ends are produced by integrase-catalyzed staggered cuts, 5 bp apart. A Y-shaped, gapped, recombination intermediate results, with the 5'-ends of the viral DNA strands and the 3' ends of target DNA strands remaining unjoined, flanking a gap of 5 bp. The last step is viral DNA integration into host chromosome. This involves host DNA repair synthesis in which the 5 bp gaps between the unjoined strands are filled in and then ligated. Since this process occurs at both cuts flanking the HIV genome, a 5 bp duplication of host DNA is produced at the ends of HIV-1 integration. Alternatively, Integrase may catalyze the excision of viral DNA just after strand transfer, this is termed disintegration.</text>
</comment>
<comment type="catalytic activity">
    <reaction evidence="10">
        <text>Specific for a P1 residue that is hydrophobic, and P1' variable, but often Pro.</text>
        <dbReference type="EC" id="3.4.23.16"/>
    </reaction>
</comment>
<comment type="catalytic activity">
    <reaction evidence="1">
        <text>Endohydrolysis of RNA in RNA/DNA hybrids. Three different cleavage modes: 1. sequence-specific internal cleavage of RNA. Human immunodeficiency virus type 1 and Moloney murine leukemia virus enzymes prefer to cleave the RNA strand one nucleotide away from the RNA-DNA junction. 2. RNA 5'-end directed cleavage 13-19 nucleotides from the RNA end. 3. DNA 3'-end directed cleavage 15-20 nucleotides away from the primer terminus.</text>
        <dbReference type="EC" id="3.1.26.13"/>
    </reaction>
</comment>
<comment type="catalytic activity">
    <reaction evidence="1">
        <text>3'-end directed exonucleolytic cleavage of viral RNA-DNA hybrid.</text>
        <dbReference type="EC" id="3.1.13.2"/>
    </reaction>
</comment>
<comment type="catalytic activity">
    <reaction evidence="11">
        <text>DNA(n) + a 2'-deoxyribonucleoside 5'-triphosphate = DNA(n+1) + diphosphate</text>
        <dbReference type="Rhea" id="RHEA:22508"/>
        <dbReference type="Rhea" id="RHEA-COMP:17339"/>
        <dbReference type="Rhea" id="RHEA-COMP:17340"/>
        <dbReference type="ChEBI" id="CHEBI:33019"/>
        <dbReference type="ChEBI" id="CHEBI:61560"/>
        <dbReference type="ChEBI" id="CHEBI:173112"/>
        <dbReference type="EC" id="2.7.7.49"/>
    </reaction>
</comment>
<comment type="catalytic activity">
    <reaction evidence="11">
        <text>DNA(n) + a 2'-deoxyribonucleoside 5'-triphosphate = DNA(n+1) + diphosphate</text>
        <dbReference type="Rhea" id="RHEA:22508"/>
        <dbReference type="Rhea" id="RHEA-COMP:17339"/>
        <dbReference type="Rhea" id="RHEA-COMP:17340"/>
        <dbReference type="ChEBI" id="CHEBI:33019"/>
        <dbReference type="ChEBI" id="CHEBI:61560"/>
        <dbReference type="ChEBI" id="CHEBI:173112"/>
        <dbReference type="EC" id="2.7.7.7"/>
    </reaction>
</comment>
<comment type="cofactor">
    <cofactor evidence="1">
        <name>Mg(2+)</name>
        <dbReference type="ChEBI" id="CHEBI:18420"/>
    </cofactor>
    <text evidence="1">Binds 2 magnesium ions for reverse transcriptase polymerase activity.</text>
</comment>
<comment type="cofactor">
    <cofactor evidence="1">
        <name>Mg(2+)</name>
        <dbReference type="ChEBI" id="CHEBI:18420"/>
    </cofactor>
    <text evidence="1">Binds 2 magnesium ions for ribonuclease H (RNase H) activity. Substrate-binding is a precondition for magnesium binding.</text>
</comment>
<comment type="cofactor">
    <cofactor evidence="1">
        <name>Mg(2+)</name>
        <dbReference type="ChEBI" id="CHEBI:18420"/>
    </cofactor>
    <text evidence="1">Magnesium ions are required for integrase activity. Binds at least 1, maybe 2 magnesium ions.</text>
</comment>
<comment type="activity regulation">
    <text evidence="1">Protease: The viral protease is inhibited by many synthetic protease inhibitors (PIs), such as amprenavir, atazanavir, indinavir, loprinavir, nelfinavir, ritonavir and saquinavir. Use of protease inhibitors in tritherapy regimens permit more ambitious therapeutic strategies. Reverse transcriptase/ribonuclease H: RT can be inhibited either by nucleoside RT inhibitors (NRTIs) or by non nucleoside RT inhibitors (NNRTIs). NRTIs act as chain terminators, whereas NNRTIs inhibit DNA polymerization by binding a small hydrophobic pocket near the RT active site and inducing an allosteric change in this region. Classical NRTIs are abacavir, adefovir (PMEA), didanosine (ddI), lamivudine (3TC), stavudine (d4T), tenofovir (PMPA), zalcitabine (ddC), and zidovudine (AZT). Classical NNRTIs are atevirdine (BHAP U-87201E), delavirdine, efavirenz (DMP-266), emivirine (I-EBU), and nevirapine (BI-RG-587). The tritherapies used as a basic effective treatment of AIDS associate two NRTIs and one NNRTI.</text>
</comment>
<comment type="subunit">
    <molecule>Matrix protein p17</molecule>
    <text evidence="5 7">Homotrimer; further assembles as hexamers of trimers (By similarity). Interacts with gp41 (via C-terminus) (By similarity). Interacts with host CALM1; this interaction induces a conformational change in the Matrix protein, triggering exposure of the myristate group (By similarity). Interacts with host AP3D1; this interaction allows the polyprotein trafficking to multivesicular bodies during virus assembly (By similarity). Part of the pre-integration complex (PIC) which is composed of viral genome, matrix protein, Vpr and integrase (By similarity).</text>
</comment>
<comment type="subunit">
    <molecule>Capsid protein p24</molecule>
    <text evidence="5 7">Homodimer; the homodimer further multimerizes as homohexamers or homopentamers. Interacts with human PPIA/CYPA (By similarity); This interaction stabilizes the capsid. Interacts with human NUP153 (By similarity). Interacts with host PDZD8; this interaction stabilizes the capsid (By similarity). Interacts with monkey TRIM5; this interaction destabilizes the capsid (By similarity).</text>
</comment>
<comment type="subunit">
    <molecule>Protease</molecule>
    <text evidence="5 7">Homodimer, whose active site consists of two apposed aspartic acid residues.</text>
</comment>
<comment type="subunit">
    <molecule>Reverse transcriptase/ribonuclease H</molecule>
    <text evidence="3">Heterodimer of p66 RT and p51 RT (RT p66/p51) (By similarity). Heterodimerization of RT is essential for DNA polymerase activity (By similarity). The overall folding of the subdomains is similar in p66 RT and p51 RT but the spatial arrangements of the subdomains are dramatically different (By similarity).</text>
</comment>
<comment type="subunit">
    <molecule>Integrase</molecule>
    <text evidence="4 5 7">Homotetramer; may further associate as a homohexadecamer (By similarity). Part of the pre-integration complex (PIC) which is composed of viral genome, matrix protein, Vpr and integrase. Interacts with human SMARCB1/INI1 and human PSIP1/LEDGF isoform 1. Interacts with human KPNA3; this interaction might play a role in nuclear import of the pre-integration complex (By similarity). Interacts with human NUP153; this interaction might play a role in nuclear import of the pre-integration complex (By similarity).</text>
</comment>
<comment type="subcellular location">
    <molecule>Gag-Pol polyprotein</molecule>
    <subcellularLocation>
        <location>Host cell membrane</location>
        <topology>Lipid-anchor</topology>
    </subcellularLocation>
    <subcellularLocation>
        <location>Host endosome</location>
        <location>Host multivesicular body</location>
    </subcellularLocation>
    <text evidence="7">These locations are linked to virus assembly sites. The main location is the cell membrane, but under some circumstances, late endosomal compartments can serve as productive sites for virion assembly.</text>
</comment>
<comment type="subcellular location">
    <molecule>Matrix protein p17</molecule>
    <subcellularLocation>
        <location>Virion membrane</location>
        <topology evidence="18">Lipid-anchor</topology>
    </subcellularLocation>
    <subcellularLocation>
        <location evidence="1">Host nucleus</location>
    </subcellularLocation>
    <subcellularLocation>
        <location evidence="1">Host cytoplasm</location>
    </subcellularLocation>
</comment>
<comment type="subcellular location">
    <molecule>Capsid protein p24</molecule>
    <subcellularLocation>
        <location evidence="18">Virion</location>
    </subcellularLocation>
</comment>
<comment type="subcellular location">
    <molecule>Nucleocapsid protein p7</molecule>
    <subcellularLocation>
        <location evidence="18">Virion</location>
    </subcellularLocation>
</comment>
<comment type="subcellular location">
    <molecule>Reverse transcriptase/ribonuclease H</molecule>
    <subcellularLocation>
        <location evidence="18">Virion</location>
    </subcellularLocation>
</comment>
<comment type="subcellular location">
    <molecule>Integrase</molecule>
    <subcellularLocation>
        <location evidence="18">Virion</location>
    </subcellularLocation>
    <subcellularLocation>
        <location evidence="18">Host nucleus</location>
    </subcellularLocation>
    <subcellularLocation>
        <location evidence="18">Host cytoplasm</location>
    </subcellularLocation>
    <text evidence="18">Nuclear at initial phase, cytoplasmic at assembly.</text>
</comment>
<comment type="alternative products">
    <event type="ribosomal frameshifting"/>
    <isoform>
        <id>Q75002-1</id>
        <name>Gag-Pol polyprotein</name>
        <sequence type="displayed"/>
    </isoform>
    <isoform>
        <id>Q75001-1</id>
        <name>Gag polyprotein</name>
        <sequence type="external"/>
    </isoform>
    <text>Translation results in the formation of the Gag polyprotein most of the time. Ribosomal frameshifting at the gag-pol genes boundary occurs at low frequency and produces the Gag-Pol polyprotein. This strategy of translation probably allows the virus to modulate the quantity of each viral protein. Maintenance of a correct Gag to Gag-Pol ratio is essential for RNA dimerization and viral infectivity.</text>
</comment>
<comment type="domain">
    <molecule>Reverse transcriptase/ribonuclease H</molecule>
    <text evidence="1">RT is structured in five subdomains: finger, palm, thumb, connection and RNase H. Within the palm subdomain, the 'primer grip' region is thought to be involved in the positioning of the primer terminus for accommodating the incoming nucleotide. The RNase H domain stabilizes the association of RT with primer-template.</text>
</comment>
<comment type="domain">
    <molecule>Reverse transcriptase/ribonuclease H</molecule>
    <text evidence="1">The tryptophan repeat motif is involved in RT p66/p51 dimerization (By similarity).</text>
</comment>
<comment type="domain">
    <molecule>Integrase</molecule>
    <text evidence="1">The core domain contains the D-x(n)-D-x(35)-E motif, named for the phylogenetically conserved glutamic acid and aspartic acid residues and the invariant 35 amino acid spacing between the second and third acidic residues. Each acidic residue of the D,D(35)E motif is independently essential for the 3'-processing and strand transfer activities of purified integrase protein.</text>
</comment>
<comment type="PTM">
    <molecule>Gag-Pol polyprotein</molecule>
    <text evidence="5 11">Specific enzymatic cleavages by the viral protease yield mature proteins. The protease is released by autocatalytic cleavage. The polyprotein is cleaved during and after budding, this process is termed maturation. Proteolytic cleavage of p66 RT removes the RNase H domain to yield the p51 RT subunit. Nucleocapsid protein p7 might be further cleaved after virus entry.</text>
</comment>
<comment type="PTM">
    <molecule>Matrix protein p17</molecule>
    <text evidence="5">Tyrosine phosphorylated presumably in the virion by a host kinase. Phosphorylation is apparently not a major regulator of membrane association.</text>
</comment>
<comment type="PTM">
    <molecule>Capsid protein p24</molecule>
    <text evidence="6">Phosphorylated possibly by host MAPK1; this phosphorylation is necessary for Pin1-mediated virion uncoating.</text>
</comment>
<comment type="PTM">
    <molecule>Nucleocapsid protein p7</molecule>
    <text evidence="2">Methylated by host PRMT6, impairing its function by reducing RNA annealing and the initiation of reverse transcription.</text>
</comment>
<comment type="miscellaneous">
    <molecule>Reverse transcriptase/ribonuclease H</molecule>
    <text evidence="1">Error-prone enzyme that lacks a proof-reading function. High mutations rate is a direct consequence of this characteristic. RT also displays frequent template switching leading to high recombination rate. Recombination mostly occurs between homologous regions of the two copackaged RNA genomes. If these two RNA molecules derive from different viral strains, reverse transcription will give rise to highly recombinated proviral DNAs.</text>
</comment>
<comment type="miscellaneous">
    <text>HIV-1 lineages are divided in three main groups, M (for Major), O (for Outlier), and N (for New, or Non-M, Non-O). The vast majority of strains found worldwide belong to the group M. Group O seems to be endemic to and largely confined to Cameroon and neighboring countries in West Central Africa, where these viruses represent a small minority of HIV-1 strains. The group N is represented by a limited number of isolates from Cameroonian persons. The group M is further subdivided in 9 clades or subtypes (A to D, F to H, J and K).</text>
</comment>
<comment type="miscellaneous">
    <text>Resistance to inhibitors associated with mutations are observed both in viral protease and in reverse transcriptase. Most of the time, single mutations confer only a modest reduction in drug susceptibility. Combination of several mutations is usually required to develop a high-level drug resistance. These mutations are predominantly found in clade B viruses and not in other genotypes. They are listed in the clade B representative isolate HXB2 (AC P04585).</text>
</comment>
<comment type="miscellaneous">
    <molecule>Isoform Gag-Pol polyprotein</molecule>
    <text>Produced by -1 ribosomal frameshifting.</text>
</comment>
<comment type="online information" name="HIV drug resistance mutations">
    <link uri="https://www.iasusa.org/hiv-drug-resistance/hiv-drug-resistance-mutations/"/>
</comment>
<comment type="online information" name="hivdb">
    <link uri="https://hivdb.stanford.edu"/>
    <text>HIV drug resistance database</text>
</comment>
<proteinExistence type="evidence at protein level"/>
<name>POL_HV1ET</name>
<evidence type="ECO:0000250" key="1"/>
<evidence type="ECO:0000250" key="2">
    <source>
        <dbReference type="UniProtKB" id="P03347"/>
    </source>
</evidence>
<evidence type="ECO:0000250" key="3">
    <source>
        <dbReference type="UniProtKB" id="P03366"/>
    </source>
</evidence>
<evidence type="ECO:0000250" key="4">
    <source>
        <dbReference type="UniProtKB" id="P03367"/>
    </source>
</evidence>
<evidence type="ECO:0000250" key="5">
    <source>
        <dbReference type="UniProtKB" id="P04585"/>
    </source>
</evidence>
<evidence type="ECO:0000250" key="6">
    <source>
        <dbReference type="UniProtKB" id="P12493"/>
    </source>
</evidence>
<evidence type="ECO:0000250" key="7">
    <source>
        <dbReference type="UniProtKB" id="P12497"/>
    </source>
</evidence>
<evidence type="ECO:0000255" key="8"/>
<evidence type="ECO:0000255" key="9">
    <source>
        <dbReference type="PROSITE-ProRule" id="PRU00047"/>
    </source>
</evidence>
<evidence type="ECO:0000255" key="10">
    <source>
        <dbReference type="PROSITE-ProRule" id="PRU00275"/>
    </source>
</evidence>
<evidence type="ECO:0000255" key="11">
    <source>
        <dbReference type="PROSITE-ProRule" id="PRU00405"/>
    </source>
</evidence>
<evidence type="ECO:0000255" key="12">
    <source>
        <dbReference type="PROSITE-ProRule" id="PRU00408"/>
    </source>
</evidence>
<evidence type="ECO:0000255" key="13">
    <source>
        <dbReference type="PROSITE-ProRule" id="PRU00450"/>
    </source>
</evidence>
<evidence type="ECO:0000255" key="14">
    <source>
        <dbReference type="PROSITE-ProRule" id="PRU00457"/>
    </source>
</evidence>
<evidence type="ECO:0000255" key="15">
    <source>
        <dbReference type="PROSITE-ProRule" id="PRU00506"/>
    </source>
</evidence>
<evidence type="ECO:0000255" key="16">
    <source>
        <dbReference type="PROSITE-ProRule" id="PRU10094"/>
    </source>
</evidence>
<evidence type="ECO:0000256" key="17">
    <source>
        <dbReference type="SAM" id="MobiDB-lite"/>
    </source>
</evidence>
<evidence type="ECO:0000305" key="18"/>
<evidence type="ECO:0007829" key="19">
    <source>
        <dbReference type="PDB" id="6T6J"/>
    </source>
</evidence>
<protein>
    <recommendedName>
        <fullName>Gag-Pol polyprotein</fullName>
    </recommendedName>
    <alternativeName>
        <fullName>Pr160Gag-Pol</fullName>
    </alternativeName>
    <component>
        <recommendedName>
            <fullName>Matrix protein p17</fullName>
            <shortName>MA</shortName>
        </recommendedName>
    </component>
    <component>
        <recommendedName>
            <fullName>Capsid protein p24</fullName>
            <shortName>CA</shortName>
        </recommendedName>
    </component>
    <component>
        <recommendedName>
            <fullName evidence="7">Spacer peptide 1</fullName>
            <shortName>SP1</shortName>
        </recommendedName>
        <alternativeName>
            <fullName>p2</fullName>
        </alternativeName>
    </component>
    <component>
        <recommendedName>
            <fullName>Nucleocapsid protein p7</fullName>
            <shortName>NC</shortName>
        </recommendedName>
    </component>
    <component>
        <recommendedName>
            <fullName>Transframe peptide</fullName>
            <shortName>TF</shortName>
        </recommendedName>
    </component>
    <component>
        <recommendedName>
            <fullName>p6-pol</fullName>
            <shortName>p6*</shortName>
        </recommendedName>
    </component>
    <component>
        <recommendedName>
            <fullName>Protease</fullName>
            <ecNumber>3.4.23.16</ecNumber>
        </recommendedName>
        <alternativeName>
            <fullName>PR</fullName>
        </alternativeName>
        <alternativeName>
            <fullName>Retropepsin</fullName>
        </alternativeName>
    </component>
    <component>
        <recommendedName>
            <fullName>Reverse transcriptase/ribonuclease H</fullName>
            <ecNumber>2.7.7.49</ecNumber>
            <ecNumber>2.7.7.7</ecNumber>
            <ecNumber>3.1.26.13</ecNumber>
        </recommendedName>
        <alternativeName>
            <fullName>Exoribonuclease H</fullName>
            <ecNumber>3.1.13.2</ecNumber>
        </alternativeName>
        <alternativeName>
            <fullName>p66 RT</fullName>
        </alternativeName>
    </component>
    <component>
        <recommendedName>
            <fullName>p51 RT</fullName>
        </recommendedName>
    </component>
    <component>
        <recommendedName>
            <fullName>p15</fullName>
        </recommendedName>
    </component>
    <component>
        <recommendedName>
            <fullName>Integrase</fullName>
            <shortName>IN</shortName>
            <ecNumber evidence="5">2.7.7.-</ecNumber>
            <ecNumber evidence="5">3.1.-.-</ecNumber>
        </recommendedName>
    </component>
</protein>